<gene>
    <name evidence="1" type="primary">lpxA</name>
    <name type="ordered locus">XAC1409</name>
</gene>
<keyword id="KW-0012">Acyltransferase</keyword>
<keyword id="KW-0963">Cytoplasm</keyword>
<keyword id="KW-0441">Lipid A biosynthesis</keyword>
<keyword id="KW-0444">Lipid biosynthesis</keyword>
<keyword id="KW-0443">Lipid metabolism</keyword>
<keyword id="KW-0677">Repeat</keyword>
<keyword id="KW-0808">Transferase</keyword>
<evidence type="ECO:0000255" key="1">
    <source>
        <dbReference type="HAMAP-Rule" id="MF_00387"/>
    </source>
</evidence>
<dbReference type="EC" id="2.3.1.129" evidence="1"/>
<dbReference type="EMBL" id="AE008923">
    <property type="protein sequence ID" value="AAM36280.1"/>
    <property type="molecule type" value="Genomic_DNA"/>
</dbReference>
<dbReference type="RefSeq" id="WP_003485381.1">
    <property type="nucleotide sequence ID" value="NC_003919.1"/>
</dbReference>
<dbReference type="SMR" id="Q8PML7"/>
<dbReference type="GeneID" id="66910576"/>
<dbReference type="KEGG" id="xac:XAC1409"/>
<dbReference type="eggNOG" id="COG1043">
    <property type="taxonomic scope" value="Bacteria"/>
</dbReference>
<dbReference type="HOGENOM" id="CLU_061249_0_0_6"/>
<dbReference type="UniPathway" id="UPA00359">
    <property type="reaction ID" value="UER00477"/>
</dbReference>
<dbReference type="Proteomes" id="UP000000576">
    <property type="component" value="Chromosome"/>
</dbReference>
<dbReference type="GO" id="GO:0005737">
    <property type="term" value="C:cytoplasm"/>
    <property type="evidence" value="ECO:0007669"/>
    <property type="project" value="UniProtKB-SubCell"/>
</dbReference>
<dbReference type="GO" id="GO:0016020">
    <property type="term" value="C:membrane"/>
    <property type="evidence" value="ECO:0007669"/>
    <property type="project" value="GOC"/>
</dbReference>
<dbReference type="GO" id="GO:0008780">
    <property type="term" value="F:acyl-[acyl-carrier-protein]-UDP-N-acetylglucosamine O-acyltransferase activity"/>
    <property type="evidence" value="ECO:0007669"/>
    <property type="project" value="UniProtKB-UniRule"/>
</dbReference>
<dbReference type="GO" id="GO:0009245">
    <property type="term" value="P:lipid A biosynthetic process"/>
    <property type="evidence" value="ECO:0007669"/>
    <property type="project" value="UniProtKB-UniRule"/>
</dbReference>
<dbReference type="CDD" id="cd03351">
    <property type="entry name" value="LbH_UDP-GlcNAc_AT"/>
    <property type="match status" value="1"/>
</dbReference>
<dbReference type="Gene3D" id="2.160.10.10">
    <property type="entry name" value="Hexapeptide repeat proteins"/>
    <property type="match status" value="1"/>
</dbReference>
<dbReference type="Gene3D" id="1.20.1180.10">
    <property type="entry name" value="Udp N-acetylglucosamine O-acyltransferase, C-terminal domain"/>
    <property type="match status" value="1"/>
</dbReference>
<dbReference type="HAMAP" id="MF_00387">
    <property type="entry name" value="LpxA"/>
    <property type="match status" value="1"/>
</dbReference>
<dbReference type="InterPro" id="IPR029098">
    <property type="entry name" value="Acetyltransf_C"/>
</dbReference>
<dbReference type="InterPro" id="IPR037157">
    <property type="entry name" value="Acetyltransf_C_sf"/>
</dbReference>
<dbReference type="InterPro" id="IPR001451">
    <property type="entry name" value="Hexapep"/>
</dbReference>
<dbReference type="InterPro" id="IPR010137">
    <property type="entry name" value="Lipid_A_LpxA"/>
</dbReference>
<dbReference type="InterPro" id="IPR011004">
    <property type="entry name" value="Trimer_LpxA-like_sf"/>
</dbReference>
<dbReference type="NCBIfam" id="TIGR01852">
    <property type="entry name" value="lipid_A_lpxA"/>
    <property type="match status" value="1"/>
</dbReference>
<dbReference type="NCBIfam" id="NF003657">
    <property type="entry name" value="PRK05289.1"/>
    <property type="match status" value="1"/>
</dbReference>
<dbReference type="PANTHER" id="PTHR43480">
    <property type="entry name" value="ACYL-[ACYL-CARRIER-PROTEIN]--UDP-N-ACETYLGLUCOSAMINE O-ACYLTRANSFERASE"/>
    <property type="match status" value="1"/>
</dbReference>
<dbReference type="PANTHER" id="PTHR43480:SF1">
    <property type="entry name" value="ACYL-[ACYL-CARRIER-PROTEIN]--UDP-N-ACETYLGLUCOSAMINE O-ACYLTRANSFERASE, MITOCHONDRIAL-RELATED"/>
    <property type="match status" value="1"/>
</dbReference>
<dbReference type="Pfam" id="PF13720">
    <property type="entry name" value="Acetyltransf_11"/>
    <property type="match status" value="1"/>
</dbReference>
<dbReference type="Pfam" id="PF00132">
    <property type="entry name" value="Hexapep"/>
    <property type="match status" value="1"/>
</dbReference>
<dbReference type="PIRSF" id="PIRSF000456">
    <property type="entry name" value="UDP-GlcNAc_acltr"/>
    <property type="match status" value="1"/>
</dbReference>
<dbReference type="SUPFAM" id="SSF51161">
    <property type="entry name" value="Trimeric LpxA-like enzymes"/>
    <property type="match status" value="1"/>
</dbReference>
<protein>
    <recommendedName>
        <fullName evidence="1">Acyl-[acyl-carrier-protein]--UDP-N-acetylglucosamine O-acyltransferase</fullName>
        <shortName evidence="1">UDP-N-acetylglucosamine acyltransferase</shortName>
        <ecNumber evidence="1">2.3.1.129</ecNumber>
    </recommendedName>
</protein>
<accession>Q8PML7</accession>
<sequence>MRDSTPLIHPTAVIDPSATLADDVRVGAFSLIGADVQIGAGTEVGPHCSIHGPTRIGRNNRFIGHAAIGGEPQDKKYAGERTELVIGDGNVIREFVTINRGTGGGGGITVVGNDNWMLAYTHVAHDCHVGNHCVFSNNTTLAGHVTVGDYVIISGFAGAHQFCRIGAHAFLGMGALTNGDVPPFTMVGSESLGRPRGINSEGLKRRGFDAERITAIKRAYRTLYVAGLPLADAKLQLAEQAKSSDDVRGMLEFIEAAERPLLR</sequence>
<feature type="chain" id="PRO_0000188076" description="Acyl-[acyl-carrier-protein]--UDP-N-acetylglucosamine O-acyltransferase">
    <location>
        <begin position="1"/>
        <end position="263"/>
    </location>
</feature>
<proteinExistence type="inferred from homology"/>
<reference key="1">
    <citation type="journal article" date="2002" name="Nature">
        <title>Comparison of the genomes of two Xanthomonas pathogens with differing host specificities.</title>
        <authorList>
            <person name="da Silva A.C.R."/>
            <person name="Ferro J.A."/>
            <person name="Reinach F.C."/>
            <person name="Farah C.S."/>
            <person name="Furlan L.R."/>
            <person name="Quaggio R.B."/>
            <person name="Monteiro-Vitorello C.B."/>
            <person name="Van Sluys M.A."/>
            <person name="Almeida N.F. Jr."/>
            <person name="Alves L.M.C."/>
            <person name="do Amaral A.M."/>
            <person name="Bertolini M.C."/>
            <person name="Camargo L.E.A."/>
            <person name="Camarotte G."/>
            <person name="Cannavan F."/>
            <person name="Cardozo J."/>
            <person name="Chambergo F."/>
            <person name="Ciapina L.P."/>
            <person name="Cicarelli R.M.B."/>
            <person name="Coutinho L.L."/>
            <person name="Cursino-Santos J.R."/>
            <person name="El-Dorry H."/>
            <person name="Faria J.B."/>
            <person name="Ferreira A.J.S."/>
            <person name="Ferreira R.C.C."/>
            <person name="Ferro M.I.T."/>
            <person name="Formighieri E.F."/>
            <person name="Franco M.C."/>
            <person name="Greggio C.C."/>
            <person name="Gruber A."/>
            <person name="Katsuyama A.M."/>
            <person name="Kishi L.T."/>
            <person name="Leite R.P."/>
            <person name="Lemos E.G.M."/>
            <person name="Lemos M.V.F."/>
            <person name="Locali E.C."/>
            <person name="Machado M.A."/>
            <person name="Madeira A.M.B.N."/>
            <person name="Martinez-Rossi N.M."/>
            <person name="Martins E.C."/>
            <person name="Meidanis J."/>
            <person name="Menck C.F.M."/>
            <person name="Miyaki C.Y."/>
            <person name="Moon D.H."/>
            <person name="Moreira L.M."/>
            <person name="Novo M.T.M."/>
            <person name="Okura V.K."/>
            <person name="Oliveira M.C."/>
            <person name="Oliveira V.R."/>
            <person name="Pereira H.A."/>
            <person name="Rossi A."/>
            <person name="Sena J.A.D."/>
            <person name="Silva C."/>
            <person name="de Souza R.F."/>
            <person name="Spinola L.A.F."/>
            <person name="Takita M.A."/>
            <person name="Tamura R.E."/>
            <person name="Teixeira E.C."/>
            <person name="Tezza R.I.D."/>
            <person name="Trindade dos Santos M."/>
            <person name="Truffi D."/>
            <person name="Tsai S.M."/>
            <person name="White F.F."/>
            <person name="Setubal J.C."/>
            <person name="Kitajima J.P."/>
        </authorList>
    </citation>
    <scope>NUCLEOTIDE SEQUENCE [LARGE SCALE GENOMIC DNA]</scope>
    <source>
        <strain>306</strain>
    </source>
</reference>
<comment type="function">
    <text evidence="1">Involved in the biosynthesis of lipid A, a phosphorylated glycolipid that anchors the lipopolysaccharide to the outer membrane of the cell.</text>
</comment>
<comment type="catalytic activity">
    <reaction evidence="1">
        <text>a (3R)-hydroxyacyl-[ACP] + UDP-N-acetyl-alpha-D-glucosamine = a UDP-3-O-[(3R)-3-hydroxyacyl]-N-acetyl-alpha-D-glucosamine + holo-[ACP]</text>
        <dbReference type="Rhea" id="RHEA:67812"/>
        <dbReference type="Rhea" id="RHEA-COMP:9685"/>
        <dbReference type="Rhea" id="RHEA-COMP:9945"/>
        <dbReference type="ChEBI" id="CHEBI:57705"/>
        <dbReference type="ChEBI" id="CHEBI:64479"/>
        <dbReference type="ChEBI" id="CHEBI:78827"/>
        <dbReference type="ChEBI" id="CHEBI:173225"/>
        <dbReference type="EC" id="2.3.1.129"/>
    </reaction>
</comment>
<comment type="pathway">
    <text evidence="1">Glycolipid biosynthesis; lipid IV(A) biosynthesis; lipid IV(A) from (3R)-3-hydroxytetradecanoyl-[acyl-carrier-protein] and UDP-N-acetyl-alpha-D-glucosamine: step 1/6.</text>
</comment>
<comment type="subunit">
    <text evidence="1">Homotrimer.</text>
</comment>
<comment type="subcellular location">
    <subcellularLocation>
        <location evidence="1">Cytoplasm</location>
    </subcellularLocation>
</comment>
<comment type="similarity">
    <text evidence="1">Belongs to the transferase hexapeptide repeat family. LpxA subfamily.</text>
</comment>
<organism>
    <name type="scientific">Xanthomonas axonopodis pv. citri (strain 306)</name>
    <dbReference type="NCBI Taxonomy" id="190486"/>
    <lineage>
        <taxon>Bacteria</taxon>
        <taxon>Pseudomonadati</taxon>
        <taxon>Pseudomonadota</taxon>
        <taxon>Gammaproteobacteria</taxon>
        <taxon>Lysobacterales</taxon>
        <taxon>Lysobacteraceae</taxon>
        <taxon>Xanthomonas</taxon>
    </lineage>
</organism>
<name>LPXA_XANAC</name>